<accession>A0JM20</accession>
<keyword id="KW-0067">ATP-binding</keyword>
<keyword id="KW-0130">Cell adhesion</keyword>
<keyword id="KW-1003">Cell membrane</keyword>
<keyword id="KW-1015">Disulfide bond</keyword>
<keyword id="KW-0325">Glycoprotein</keyword>
<keyword id="KW-0393">Immunoglobulin domain</keyword>
<keyword id="KW-0418">Kinase</keyword>
<keyword id="KW-0472">Membrane</keyword>
<keyword id="KW-0547">Nucleotide-binding</keyword>
<keyword id="KW-0597">Phosphoprotein</keyword>
<keyword id="KW-0675">Receptor</keyword>
<keyword id="KW-1185">Reference proteome</keyword>
<keyword id="KW-0677">Repeat</keyword>
<keyword id="KW-0732">Signal</keyword>
<keyword id="KW-0808">Transferase</keyword>
<keyword id="KW-0812">Transmembrane</keyword>
<keyword id="KW-1133">Transmembrane helix</keyword>
<keyword id="KW-0829">Tyrosine-protein kinase</keyword>
<feature type="signal peptide" evidence="2">
    <location>
        <begin position="1"/>
        <end position="28"/>
    </location>
</feature>
<feature type="chain" id="PRO_0000346117" description="Tyrosine-protein kinase receptor TYRO3">
    <location>
        <begin position="29"/>
        <end position="881"/>
    </location>
</feature>
<feature type="topological domain" description="Extracellular" evidence="2">
    <location>
        <begin position="29"/>
        <end position="414"/>
    </location>
</feature>
<feature type="transmembrane region" description="Helical" evidence="2">
    <location>
        <begin position="415"/>
        <end position="435"/>
    </location>
</feature>
<feature type="topological domain" description="Cytoplasmic" evidence="2">
    <location>
        <begin position="436"/>
        <end position="881"/>
    </location>
</feature>
<feature type="domain" description="Ig-like C2-type 1">
    <location>
        <begin position="29"/>
        <end position="114"/>
    </location>
</feature>
<feature type="domain" description="Ig-like C2-type 2">
    <location>
        <begin position="125"/>
        <end position="206"/>
    </location>
</feature>
<feature type="domain" description="Fibronectin type-III 1" evidence="5">
    <location>
        <begin position="213"/>
        <end position="306"/>
    </location>
</feature>
<feature type="domain" description="Fibronectin type-III 2" evidence="5">
    <location>
        <begin position="311"/>
        <end position="401"/>
    </location>
</feature>
<feature type="domain" description="Protein kinase" evidence="4">
    <location>
        <begin position="503"/>
        <end position="774"/>
    </location>
</feature>
<feature type="region of interest" description="Disordered" evidence="7">
    <location>
        <begin position="846"/>
        <end position="881"/>
    </location>
</feature>
<feature type="compositionally biased region" description="Acidic residues" evidence="7">
    <location>
        <begin position="862"/>
        <end position="874"/>
    </location>
</feature>
<feature type="active site" description="Proton acceptor" evidence="4 6">
    <location>
        <position position="640"/>
    </location>
</feature>
<feature type="binding site" evidence="4">
    <location>
        <begin position="509"/>
        <end position="517"/>
    </location>
    <ligand>
        <name>ATP</name>
        <dbReference type="ChEBI" id="CHEBI:30616"/>
    </ligand>
</feature>
<feature type="binding site" evidence="4">
    <location>
        <position position="535"/>
    </location>
    <ligand>
        <name>ATP</name>
        <dbReference type="ChEBI" id="CHEBI:30616"/>
    </ligand>
</feature>
<feature type="modified residue" description="Phosphotyrosine; by autocatalysis" evidence="1">
    <location>
        <position position="671"/>
    </location>
</feature>
<feature type="glycosylation site" description="N-linked (GlcNAc...) asparagine" evidence="2">
    <location>
        <position position="37"/>
    </location>
</feature>
<feature type="glycosylation site" description="N-linked (GlcNAc...) asparagine" evidence="2">
    <location>
        <position position="49"/>
    </location>
</feature>
<feature type="glycosylation site" description="N-linked (GlcNAc...) asparagine" evidence="2">
    <location>
        <position position="143"/>
    </location>
</feature>
<feature type="glycosylation site" description="N-linked (GlcNAc...) asparagine" evidence="2">
    <location>
        <position position="216"/>
    </location>
</feature>
<feature type="glycosylation site" description="N-linked (GlcNAc...) asparagine" evidence="2">
    <location>
        <position position="279"/>
    </location>
</feature>
<feature type="glycosylation site" description="N-linked (GlcNAc...) asparagine" evidence="2">
    <location>
        <position position="351"/>
    </location>
</feature>
<feature type="glycosylation site" description="N-linked (GlcNAc...) asparagine" evidence="2">
    <location>
        <position position="365"/>
    </location>
</feature>
<feature type="disulfide bond" evidence="3">
    <location>
        <begin position="50"/>
        <end position="103"/>
    </location>
</feature>
<feature type="disulfide bond" evidence="3">
    <location>
        <begin position="146"/>
        <end position="189"/>
    </location>
</feature>
<reference key="1">
    <citation type="submission" date="2006-10" db="EMBL/GenBank/DDBJ databases">
        <authorList>
            <consortium name="NIH - Xenopus Gene Collection (XGC) project"/>
        </authorList>
    </citation>
    <scope>NUCLEOTIDE SEQUENCE [LARGE SCALE MRNA]</scope>
    <source>
        <tissue>Testis</tissue>
    </source>
</reference>
<sequence>MVNPGPPGLIAGLLLAALSLSSVDGTKALGFVGHGYNMTVSQGHEAKLNCSLQGMEEPEIQWLKDGVPVQSADQMYIPVDEDHWISFLSLKNVERPDAGRYWCEAEHSGRKSVSDAIWVMVEGVPYFTLEPKDLSVTPNSPFNMTCAAVGPPEPLVIFWWVGDSPLGKSESSPSVLQIPGIRERTAFSCEAHNAKGVSSSRTAIVEVKGLPYPPFNVTISKVTGSTATVTWSPGFNSFSLIKSCTIQVQSLHGNREMYSRLTSVPPFAVVLDDLQPLTNHSVRVQCTNEMGASPFSEWITFNTKEKVPQLIPQNVHMTKTDSCLLLDWEDVDPDKEGYNILGFKVQWEQENTTQGELFVQENQANLTKWNPEKDLTIRICIANAAGCGPWSEFLLAGSKEEAGKQRHPHTRMSWVPMVLGILTALVTVVAMTLIFLRKGRKETRFGNMLGSMLGRGGPVIQFTAARSFNRRGPEVMEATLDSIGISDELKSKLKDVLIQQQQFTLGRTLGKGEFGSVREAQLKMEDDTMQKVAVKMLKAEIFCSSDIEEFLREAAFMKEFDHPNVCKLIGVSLRSRTKGRLPVPMVILPFMKHGDLHTFLLMSRIGEEPIALPIQTLVRFMIDICSGMEYLSSKNFIHRDLATRNCMLNEDMTVCVADFGLSKKIYSGDYYRQGCASKLPVKWLALESLADNVYTVHSDVWAFGVTLWEIVTRGQTPYAGVENSEIYSYLTAGNRLKQPPDCLDELYEMMCQCWITEPKRRPSFVDLKRRLEAIWGRLSILSASHDQLYVNLGETCGAAAAVSGLHSAFCKEEDYCAGPSQTCGTSAITSDYRYIVNPGCLREGNEWSSSAQNGEARGLLHEEEEEEEEEEMQEEQVVITL</sequence>
<gene>
    <name type="primary">tyro3</name>
</gene>
<dbReference type="EC" id="2.7.10.1"/>
<dbReference type="EMBL" id="BC125706">
    <property type="protein sequence ID" value="AAI25707.1"/>
    <property type="molecule type" value="mRNA"/>
</dbReference>
<dbReference type="RefSeq" id="NP_001072731.1">
    <property type="nucleotide sequence ID" value="NM_001079263.1"/>
</dbReference>
<dbReference type="SMR" id="A0JM20"/>
<dbReference type="FunCoup" id="A0JM20">
    <property type="interactions" value="374"/>
</dbReference>
<dbReference type="STRING" id="8364.ENSXETP00000025099"/>
<dbReference type="GlyCosmos" id="A0JM20">
    <property type="glycosylation" value="7 sites, No reported glycans"/>
</dbReference>
<dbReference type="PaxDb" id="8364-ENSXETP00000060585"/>
<dbReference type="GeneID" id="780188"/>
<dbReference type="KEGG" id="xtr:780188"/>
<dbReference type="AGR" id="Xenbase:XB-GENE-922144"/>
<dbReference type="CTD" id="7301"/>
<dbReference type="Xenbase" id="XB-GENE-922144">
    <property type="gene designation" value="tyro3"/>
</dbReference>
<dbReference type="eggNOG" id="ENOG502QRYR">
    <property type="taxonomic scope" value="Eukaryota"/>
</dbReference>
<dbReference type="InParanoid" id="A0JM20"/>
<dbReference type="OrthoDB" id="4062651at2759"/>
<dbReference type="TreeFam" id="TF317402"/>
<dbReference type="Proteomes" id="UP000008143">
    <property type="component" value="Chromosome 8"/>
</dbReference>
<dbReference type="Bgee" id="ENSXETG00000000052">
    <property type="expression patterns" value="Expressed in brain and 12 other cell types or tissues"/>
</dbReference>
<dbReference type="ExpressionAtlas" id="A0JM20">
    <property type="expression patterns" value="baseline"/>
</dbReference>
<dbReference type="GO" id="GO:0005886">
    <property type="term" value="C:plasma membrane"/>
    <property type="evidence" value="ECO:0007669"/>
    <property type="project" value="UniProtKB-SubCell"/>
</dbReference>
<dbReference type="GO" id="GO:0005524">
    <property type="term" value="F:ATP binding"/>
    <property type="evidence" value="ECO:0007669"/>
    <property type="project" value="UniProtKB-KW"/>
</dbReference>
<dbReference type="GO" id="GO:0004714">
    <property type="term" value="F:transmembrane receptor protein tyrosine kinase activity"/>
    <property type="evidence" value="ECO:0007669"/>
    <property type="project" value="UniProtKB-EC"/>
</dbReference>
<dbReference type="GO" id="GO:0007155">
    <property type="term" value="P:cell adhesion"/>
    <property type="evidence" value="ECO:0007669"/>
    <property type="project" value="UniProtKB-KW"/>
</dbReference>
<dbReference type="CDD" id="cd00063">
    <property type="entry name" value="FN3"/>
    <property type="match status" value="2"/>
</dbReference>
<dbReference type="CDD" id="cd05749">
    <property type="entry name" value="IgI_2_Axl_Tyro3_like"/>
    <property type="match status" value="1"/>
</dbReference>
<dbReference type="CDD" id="cd05074">
    <property type="entry name" value="PTKc_Tyro3"/>
    <property type="match status" value="1"/>
</dbReference>
<dbReference type="FunFam" id="1.10.510.10:FF:000089">
    <property type="entry name" value="Tyrosine-protein kinase receptor TYRO3"/>
    <property type="match status" value="1"/>
</dbReference>
<dbReference type="FunFam" id="2.60.40.10:FF:000296">
    <property type="entry name" value="Tyrosine-protein kinase receptor TYRO3"/>
    <property type="match status" value="1"/>
</dbReference>
<dbReference type="FunFam" id="2.60.40.10:FF:000484">
    <property type="entry name" value="Tyrosine-protein kinase receptor TYRO3"/>
    <property type="match status" value="1"/>
</dbReference>
<dbReference type="FunFam" id="2.60.40.10:FF:000605">
    <property type="entry name" value="Tyrosine-protein kinase receptor TYRO3"/>
    <property type="match status" value="1"/>
</dbReference>
<dbReference type="FunFam" id="2.60.40.10:FF:001653">
    <property type="entry name" value="Tyrosine-protein kinase receptor TYRO3"/>
    <property type="match status" value="1"/>
</dbReference>
<dbReference type="FunFam" id="3.30.200.20:FF:000111">
    <property type="entry name" value="Tyrosine-protein kinase receptor TYRO3"/>
    <property type="match status" value="1"/>
</dbReference>
<dbReference type="Gene3D" id="2.60.40.10">
    <property type="entry name" value="Immunoglobulins"/>
    <property type="match status" value="4"/>
</dbReference>
<dbReference type="Gene3D" id="3.30.200.20">
    <property type="entry name" value="Phosphorylase Kinase, domain 1"/>
    <property type="match status" value="1"/>
</dbReference>
<dbReference type="Gene3D" id="1.10.510.10">
    <property type="entry name" value="Transferase(Phosphotransferase) domain 1"/>
    <property type="match status" value="1"/>
</dbReference>
<dbReference type="InterPro" id="IPR003961">
    <property type="entry name" value="FN3_dom"/>
</dbReference>
<dbReference type="InterPro" id="IPR036116">
    <property type="entry name" value="FN3_sf"/>
</dbReference>
<dbReference type="InterPro" id="IPR007110">
    <property type="entry name" value="Ig-like_dom"/>
</dbReference>
<dbReference type="InterPro" id="IPR036179">
    <property type="entry name" value="Ig-like_dom_sf"/>
</dbReference>
<dbReference type="InterPro" id="IPR013783">
    <property type="entry name" value="Ig-like_fold"/>
</dbReference>
<dbReference type="InterPro" id="IPR013098">
    <property type="entry name" value="Ig_I-set"/>
</dbReference>
<dbReference type="InterPro" id="IPR003599">
    <property type="entry name" value="Ig_sub"/>
</dbReference>
<dbReference type="InterPro" id="IPR003598">
    <property type="entry name" value="Ig_sub2"/>
</dbReference>
<dbReference type="InterPro" id="IPR011009">
    <property type="entry name" value="Kinase-like_dom_sf"/>
</dbReference>
<dbReference type="InterPro" id="IPR000719">
    <property type="entry name" value="Prot_kinase_dom"/>
</dbReference>
<dbReference type="InterPro" id="IPR017441">
    <property type="entry name" value="Protein_kinase_ATP_BS"/>
</dbReference>
<dbReference type="InterPro" id="IPR050122">
    <property type="entry name" value="RTK"/>
</dbReference>
<dbReference type="InterPro" id="IPR001245">
    <property type="entry name" value="Ser-Thr/Tyr_kinase_cat_dom"/>
</dbReference>
<dbReference type="InterPro" id="IPR008266">
    <property type="entry name" value="Tyr_kinase_AS"/>
</dbReference>
<dbReference type="InterPro" id="IPR020635">
    <property type="entry name" value="Tyr_kinase_cat_dom"/>
</dbReference>
<dbReference type="PANTHER" id="PTHR24416">
    <property type="entry name" value="TYROSINE-PROTEIN KINASE RECEPTOR"/>
    <property type="match status" value="1"/>
</dbReference>
<dbReference type="PANTHER" id="PTHR24416:SF279">
    <property type="entry name" value="TYROSINE-PROTEIN KINASE RECEPTOR TYRO3"/>
    <property type="match status" value="1"/>
</dbReference>
<dbReference type="Pfam" id="PF00041">
    <property type="entry name" value="fn3"/>
    <property type="match status" value="2"/>
</dbReference>
<dbReference type="Pfam" id="PF07679">
    <property type="entry name" value="I-set"/>
    <property type="match status" value="1"/>
</dbReference>
<dbReference type="Pfam" id="PF07714">
    <property type="entry name" value="PK_Tyr_Ser-Thr"/>
    <property type="match status" value="1"/>
</dbReference>
<dbReference type="PIRSF" id="PIRSF000615">
    <property type="entry name" value="TyrPK_CSF1-R"/>
    <property type="match status" value="1"/>
</dbReference>
<dbReference type="PRINTS" id="PR00109">
    <property type="entry name" value="TYRKINASE"/>
</dbReference>
<dbReference type="SMART" id="SM00060">
    <property type="entry name" value="FN3"/>
    <property type="match status" value="2"/>
</dbReference>
<dbReference type="SMART" id="SM00409">
    <property type="entry name" value="IG"/>
    <property type="match status" value="2"/>
</dbReference>
<dbReference type="SMART" id="SM00408">
    <property type="entry name" value="IGc2"/>
    <property type="match status" value="2"/>
</dbReference>
<dbReference type="SMART" id="SM00219">
    <property type="entry name" value="TyrKc"/>
    <property type="match status" value="1"/>
</dbReference>
<dbReference type="SUPFAM" id="SSF49265">
    <property type="entry name" value="Fibronectin type III"/>
    <property type="match status" value="1"/>
</dbReference>
<dbReference type="SUPFAM" id="SSF48726">
    <property type="entry name" value="Immunoglobulin"/>
    <property type="match status" value="2"/>
</dbReference>
<dbReference type="SUPFAM" id="SSF56112">
    <property type="entry name" value="Protein kinase-like (PK-like)"/>
    <property type="match status" value="1"/>
</dbReference>
<dbReference type="PROSITE" id="PS50853">
    <property type="entry name" value="FN3"/>
    <property type="match status" value="2"/>
</dbReference>
<dbReference type="PROSITE" id="PS50835">
    <property type="entry name" value="IG_LIKE"/>
    <property type="match status" value="2"/>
</dbReference>
<dbReference type="PROSITE" id="PS00107">
    <property type="entry name" value="PROTEIN_KINASE_ATP"/>
    <property type="match status" value="1"/>
</dbReference>
<dbReference type="PROSITE" id="PS50011">
    <property type="entry name" value="PROTEIN_KINASE_DOM"/>
    <property type="match status" value="1"/>
</dbReference>
<dbReference type="PROSITE" id="PS00109">
    <property type="entry name" value="PROTEIN_KINASE_TYR"/>
    <property type="match status" value="1"/>
</dbReference>
<protein>
    <recommendedName>
        <fullName>Tyrosine-protein kinase receptor TYRO3</fullName>
        <ecNumber>2.7.10.1</ecNumber>
    </recommendedName>
</protein>
<evidence type="ECO:0000250" key="1"/>
<evidence type="ECO:0000255" key="2"/>
<evidence type="ECO:0000255" key="3">
    <source>
        <dbReference type="PROSITE-ProRule" id="PRU00114"/>
    </source>
</evidence>
<evidence type="ECO:0000255" key="4">
    <source>
        <dbReference type="PROSITE-ProRule" id="PRU00159"/>
    </source>
</evidence>
<evidence type="ECO:0000255" key="5">
    <source>
        <dbReference type="PROSITE-ProRule" id="PRU00316"/>
    </source>
</evidence>
<evidence type="ECO:0000255" key="6">
    <source>
        <dbReference type="PROSITE-ProRule" id="PRU10028"/>
    </source>
</evidence>
<evidence type="ECO:0000256" key="7">
    <source>
        <dbReference type="SAM" id="MobiDB-lite"/>
    </source>
</evidence>
<comment type="function">
    <text evidence="1">May be involved in cell adhesion processes, particularly in the central nervous system.</text>
</comment>
<comment type="catalytic activity">
    <reaction evidence="6">
        <text>L-tyrosyl-[protein] + ATP = O-phospho-L-tyrosyl-[protein] + ADP + H(+)</text>
        <dbReference type="Rhea" id="RHEA:10596"/>
        <dbReference type="Rhea" id="RHEA-COMP:10136"/>
        <dbReference type="Rhea" id="RHEA-COMP:20101"/>
        <dbReference type="ChEBI" id="CHEBI:15378"/>
        <dbReference type="ChEBI" id="CHEBI:30616"/>
        <dbReference type="ChEBI" id="CHEBI:46858"/>
        <dbReference type="ChEBI" id="CHEBI:61978"/>
        <dbReference type="ChEBI" id="CHEBI:456216"/>
        <dbReference type="EC" id="2.7.10.1"/>
    </reaction>
</comment>
<comment type="subcellular location">
    <subcellularLocation>
        <location evidence="1">Cell membrane</location>
        <topology evidence="1">Single-pass type I membrane protein</topology>
    </subcellularLocation>
</comment>
<comment type="PTM">
    <text evidence="1">Tyrosine phosphorylated upon receptor stimulation.</text>
</comment>
<comment type="similarity">
    <text evidence="4">Belongs to the protein kinase superfamily. Tyr protein kinase family. AXL/UFO subfamily.</text>
</comment>
<proteinExistence type="evidence at transcript level"/>
<name>TYRO3_XENTR</name>
<organism>
    <name type="scientific">Xenopus tropicalis</name>
    <name type="common">Western clawed frog</name>
    <name type="synonym">Silurana tropicalis</name>
    <dbReference type="NCBI Taxonomy" id="8364"/>
    <lineage>
        <taxon>Eukaryota</taxon>
        <taxon>Metazoa</taxon>
        <taxon>Chordata</taxon>
        <taxon>Craniata</taxon>
        <taxon>Vertebrata</taxon>
        <taxon>Euteleostomi</taxon>
        <taxon>Amphibia</taxon>
        <taxon>Batrachia</taxon>
        <taxon>Anura</taxon>
        <taxon>Pipoidea</taxon>
        <taxon>Pipidae</taxon>
        <taxon>Xenopodinae</taxon>
        <taxon>Xenopus</taxon>
        <taxon>Silurana</taxon>
    </lineage>
</organism>